<sequence>MARKGHIGKRDVLPDPVYNSKVVTKLINNIMKDGKKGVAQKICYGAFDIIEQKTSKEPMEVFEEAMNNIMPLLEVKARRIGGATYQVPIEVRPERRQTLGIRWLLVASRKRGEKYMRERLAAELMDAANNTGTAVKKREDTHKMAEANKAFAHYRY</sequence>
<dbReference type="EMBL" id="AP009049">
    <property type="protein sequence ID" value="BAH05230.1"/>
    <property type="molecule type" value="Genomic_DNA"/>
</dbReference>
<dbReference type="RefSeq" id="WP_011988800.1">
    <property type="nucleotide sequence ID" value="NC_011837.1"/>
</dbReference>
<dbReference type="SMR" id="B9DYA5"/>
<dbReference type="KEGG" id="ckr:CKR_0179"/>
<dbReference type="HOGENOM" id="CLU_072226_1_1_9"/>
<dbReference type="Proteomes" id="UP000007969">
    <property type="component" value="Chromosome"/>
</dbReference>
<dbReference type="GO" id="GO:0015935">
    <property type="term" value="C:small ribosomal subunit"/>
    <property type="evidence" value="ECO:0007669"/>
    <property type="project" value="InterPro"/>
</dbReference>
<dbReference type="GO" id="GO:0019843">
    <property type="term" value="F:rRNA binding"/>
    <property type="evidence" value="ECO:0007669"/>
    <property type="project" value="UniProtKB-UniRule"/>
</dbReference>
<dbReference type="GO" id="GO:0003735">
    <property type="term" value="F:structural constituent of ribosome"/>
    <property type="evidence" value="ECO:0007669"/>
    <property type="project" value="InterPro"/>
</dbReference>
<dbReference type="GO" id="GO:0000049">
    <property type="term" value="F:tRNA binding"/>
    <property type="evidence" value="ECO:0007669"/>
    <property type="project" value="UniProtKB-UniRule"/>
</dbReference>
<dbReference type="GO" id="GO:0006412">
    <property type="term" value="P:translation"/>
    <property type="evidence" value="ECO:0007669"/>
    <property type="project" value="UniProtKB-UniRule"/>
</dbReference>
<dbReference type="CDD" id="cd14869">
    <property type="entry name" value="uS7_Bacteria"/>
    <property type="match status" value="1"/>
</dbReference>
<dbReference type="FunFam" id="1.10.455.10:FF:000001">
    <property type="entry name" value="30S ribosomal protein S7"/>
    <property type="match status" value="1"/>
</dbReference>
<dbReference type="Gene3D" id="1.10.455.10">
    <property type="entry name" value="Ribosomal protein S7 domain"/>
    <property type="match status" value="1"/>
</dbReference>
<dbReference type="HAMAP" id="MF_00480_B">
    <property type="entry name" value="Ribosomal_uS7_B"/>
    <property type="match status" value="1"/>
</dbReference>
<dbReference type="InterPro" id="IPR000235">
    <property type="entry name" value="Ribosomal_uS7"/>
</dbReference>
<dbReference type="InterPro" id="IPR005717">
    <property type="entry name" value="Ribosomal_uS7_bac/org-type"/>
</dbReference>
<dbReference type="InterPro" id="IPR020606">
    <property type="entry name" value="Ribosomal_uS7_CS"/>
</dbReference>
<dbReference type="InterPro" id="IPR023798">
    <property type="entry name" value="Ribosomal_uS7_dom"/>
</dbReference>
<dbReference type="InterPro" id="IPR036823">
    <property type="entry name" value="Ribosomal_uS7_dom_sf"/>
</dbReference>
<dbReference type="NCBIfam" id="TIGR01029">
    <property type="entry name" value="rpsG_bact"/>
    <property type="match status" value="1"/>
</dbReference>
<dbReference type="PANTHER" id="PTHR11205">
    <property type="entry name" value="RIBOSOMAL PROTEIN S7"/>
    <property type="match status" value="1"/>
</dbReference>
<dbReference type="Pfam" id="PF00177">
    <property type="entry name" value="Ribosomal_S7"/>
    <property type="match status" value="1"/>
</dbReference>
<dbReference type="PIRSF" id="PIRSF002122">
    <property type="entry name" value="RPS7p_RPS7a_RPS5e_RPS7o"/>
    <property type="match status" value="1"/>
</dbReference>
<dbReference type="SUPFAM" id="SSF47973">
    <property type="entry name" value="Ribosomal protein S7"/>
    <property type="match status" value="1"/>
</dbReference>
<dbReference type="PROSITE" id="PS00052">
    <property type="entry name" value="RIBOSOMAL_S7"/>
    <property type="match status" value="1"/>
</dbReference>
<protein>
    <recommendedName>
        <fullName evidence="1">Small ribosomal subunit protein uS7</fullName>
    </recommendedName>
    <alternativeName>
        <fullName evidence="2">30S ribosomal protein S7</fullName>
    </alternativeName>
</protein>
<name>RS7_CLOK1</name>
<feature type="chain" id="PRO_1000135594" description="Small ribosomal subunit protein uS7">
    <location>
        <begin position="1"/>
        <end position="156"/>
    </location>
</feature>
<keyword id="KW-0687">Ribonucleoprotein</keyword>
<keyword id="KW-0689">Ribosomal protein</keyword>
<keyword id="KW-0694">RNA-binding</keyword>
<keyword id="KW-0699">rRNA-binding</keyword>
<keyword id="KW-0820">tRNA-binding</keyword>
<accession>B9DYA5</accession>
<comment type="function">
    <text evidence="1">One of the primary rRNA binding proteins, it binds directly to 16S rRNA where it nucleates assembly of the head domain of the 30S subunit. Is located at the subunit interface close to the decoding center, probably blocks exit of the E-site tRNA.</text>
</comment>
<comment type="subunit">
    <text evidence="1">Part of the 30S ribosomal subunit. Contacts proteins S9 and S11.</text>
</comment>
<comment type="similarity">
    <text evidence="1">Belongs to the universal ribosomal protein uS7 family.</text>
</comment>
<organism>
    <name type="scientific">Clostridium kluyveri (strain NBRC 12016)</name>
    <dbReference type="NCBI Taxonomy" id="583346"/>
    <lineage>
        <taxon>Bacteria</taxon>
        <taxon>Bacillati</taxon>
        <taxon>Bacillota</taxon>
        <taxon>Clostridia</taxon>
        <taxon>Eubacteriales</taxon>
        <taxon>Clostridiaceae</taxon>
        <taxon>Clostridium</taxon>
    </lineage>
</organism>
<reference key="1">
    <citation type="submission" date="2005-09" db="EMBL/GenBank/DDBJ databases">
        <title>Complete genome sequence of Clostridium kluyveri and comparative genomics of Clostridia species.</title>
        <authorList>
            <person name="Inui M."/>
            <person name="Nonaka H."/>
            <person name="Shinoda Y."/>
            <person name="Ikenaga Y."/>
            <person name="Abe M."/>
            <person name="Naito K."/>
            <person name="Vertes A.A."/>
            <person name="Yukawa H."/>
        </authorList>
    </citation>
    <scope>NUCLEOTIDE SEQUENCE [LARGE SCALE GENOMIC DNA]</scope>
    <source>
        <strain>NBRC 12016</strain>
    </source>
</reference>
<proteinExistence type="inferred from homology"/>
<evidence type="ECO:0000255" key="1">
    <source>
        <dbReference type="HAMAP-Rule" id="MF_00480"/>
    </source>
</evidence>
<evidence type="ECO:0000305" key="2"/>
<gene>
    <name evidence="1" type="primary">rpsG</name>
    <name type="ordered locus">CKR_0179</name>
</gene>